<proteinExistence type="evidence at protein level"/>
<organism>
    <name type="scientific">Nicotiana langsdorffii</name>
    <name type="common">Langsdorff's tobacco</name>
    <dbReference type="NCBI Taxonomy" id="118700"/>
    <lineage>
        <taxon>Eukaryota</taxon>
        <taxon>Viridiplantae</taxon>
        <taxon>Streptophyta</taxon>
        <taxon>Embryophyta</taxon>
        <taxon>Tracheophyta</taxon>
        <taxon>Spermatophyta</taxon>
        <taxon>Magnoliopsida</taxon>
        <taxon>eudicotyledons</taxon>
        <taxon>Gunneridae</taxon>
        <taxon>Pentapetalae</taxon>
        <taxon>asterids</taxon>
        <taxon>lamiids</taxon>
        <taxon>Solanales</taxon>
        <taxon>Solanaceae</taxon>
        <taxon>Nicotianoideae</taxon>
        <taxon>Nicotianeae</taxon>
        <taxon>Nicotiana</taxon>
    </lineage>
</organism>
<comment type="function">
    <text evidence="5">Monoterpene synthase (TPS) involved in the biosynthesis of monoterpene natural products of the 'cineole cassette', volatile compounds present in floral scent (PubMed:21527560). Catalyzes the conversion of (2E)-geranyl diphosphate (GPP) into alpha-terpineol and, as minor products, sabinene, beta-myrcene, limonene, alpha-pinene and 1,8-cineole (PubMed:21527560).</text>
</comment>
<comment type="catalytic activity">
    <reaction evidence="5">
        <text>(2E)-geranyl diphosphate + H2O = (S)-alpha-terpineol + diphosphate</text>
        <dbReference type="Rhea" id="RHEA:32551"/>
        <dbReference type="ChEBI" id="CHEBI:128"/>
        <dbReference type="ChEBI" id="CHEBI:15377"/>
        <dbReference type="ChEBI" id="CHEBI:33019"/>
        <dbReference type="ChEBI" id="CHEBI:58057"/>
        <dbReference type="EC" id="4.2.3.111"/>
    </reaction>
    <physiologicalReaction direction="left-to-right" evidence="5">
        <dbReference type="Rhea" id="RHEA:32552"/>
    </physiologicalReaction>
</comment>
<comment type="catalytic activity">
    <reaction evidence="5">
        <text>(2E)-geranyl diphosphate = sabinene + diphosphate</text>
        <dbReference type="Rhea" id="RHEA:68636"/>
        <dbReference type="ChEBI" id="CHEBI:33019"/>
        <dbReference type="ChEBI" id="CHEBI:50027"/>
        <dbReference type="ChEBI" id="CHEBI:58057"/>
    </reaction>
    <physiologicalReaction direction="left-to-right" evidence="5">
        <dbReference type="Rhea" id="RHEA:68637"/>
    </physiologicalReaction>
</comment>
<comment type="catalytic activity">
    <reaction evidence="5">
        <text>(2E)-geranyl diphosphate = beta-myrcene + diphosphate</text>
        <dbReference type="Rhea" id="RHEA:16965"/>
        <dbReference type="ChEBI" id="CHEBI:17221"/>
        <dbReference type="ChEBI" id="CHEBI:33019"/>
        <dbReference type="ChEBI" id="CHEBI:58057"/>
        <dbReference type="EC" id="4.2.3.15"/>
    </reaction>
    <physiologicalReaction direction="left-to-right" evidence="5">
        <dbReference type="Rhea" id="RHEA:16966"/>
    </physiologicalReaction>
</comment>
<comment type="catalytic activity">
    <reaction evidence="5">
        <text>(2E)-geranyl diphosphate = limonene + diphosphate</text>
        <dbReference type="Rhea" id="RHEA:68640"/>
        <dbReference type="ChEBI" id="CHEBI:15384"/>
        <dbReference type="ChEBI" id="CHEBI:33019"/>
        <dbReference type="ChEBI" id="CHEBI:58057"/>
    </reaction>
    <physiologicalReaction direction="left-to-right" evidence="5">
        <dbReference type="Rhea" id="RHEA:68641"/>
    </physiologicalReaction>
</comment>
<comment type="catalytic activity">
    <reaction evidence="5">
        <text>(2E)-geranyl diphosphate + H2O = 1,8-cineole + diphosphate</text>
        <dbReference type="Rhea" id="RHEA:32543"/>
        <dbReference type="ChEBI" id="CHEBI:15377"/>
        <dbReference type="ChEBI" id="CHEBI:27961"/>
        <dbReference type="ChEBI" id="CHEBI:33019"/>
        <dbReference type="ChEBI" id="CHEBI:58057"/>
        <dbReference type="EC" id="4.2.3.108"/>
    </reaction>
    <physiologicalReaction direction="left-to-right" evidence="5">
        <dbReference type="Rhea" id="RHEA:32544"/>
    </physiologicalReaction>
</comment>
<comment type="catalytic activity">
    <reaction evidence="5">
        <text>(2E)-geranyl diphosphate = alpha-pinene + diphosphate</text>
        <dbReference type="Rhea" id="RHEA:25662"/>
        <dbReference type="ChEBI" id="CHEBI:33019"/>
        <dbReference type="ChEBI" id="CHEBI:36740"/>
        <dbReference type="ChEBI" id="CHEBI:58057"/>
    </reaction>
    <physiologicalReaction direction="left-to-right" evidence="5">
        <dbReference type="Rhea" id="RHEA:25663"/>
    </physiologicalReaction>
</comment>
<comment type="cofactor">
    <cofactor evidence="1">
        <name>Mg(2+)</name>
        <dbReference type="ChEBI" id="CHEBI:18420"/>
    </cofactor>
    <cofactor evidence="1">
        <name>Mn(2+)</name>
        <dbReference type="ChEBI" id="CHEBI:29035"/>
    </cofactor>
    <text evidence="1">Binds 3 Mg(2+) or Mn(2+) ions per subunit.</text>
</comment>
<comment type="pathway">
    <text evidence="5">Secondary metabolite biosynthesis; terpenoid biosynthesis.</text>
</comment>
<comment type="subunit">
    <text evidence="3">Monomer.</text>
</comment>
<comment type="subcellular location">
    <subcellularLocation>
        <location evidence="4">Plastid</location>
        <location evidence="4">Chloroplast</location>
    </subcellularLocation>
</comment>
<comment type="tissue specificity">
    <text evidence="5">Confined to flowers.</text>
</comment>
<comment type="developmental stage">
    <text evidence="5">In flowers, present in pistils and in the adaxial and abaxial epidermis of the petals (PubMed:21527560). Maximal enzyme activities are reached at the second day after anthesis when flowers are fully opened (PubMed:21527560).</text>
</comment>
<comment type="induction">
    <text evidence="5">Enzyme activity levels follow a circadian oscillation, reaching a maxima at the transition from day to night (diurnal rhythm).</text>
</comment>
<comment type="domain">
    <text evidence="7">The Asp-Asp-Xaa-Xaa-Asp/Glu (DDXXD/E) motif is important for the catalytic activity, presumably through binding to Mg(2+).</text>
</comment>
<comment type="similarity">
    <text evidence="7">Belongs to the terpene synthase family. Tpsb subfamily.</text>
</comment>
<keyword id="KW-0150">Chloroplast</keyword>
<keyword id="KW-0456">Lyase</keyword>
<keyword id="KW-0460">Magnesium</keyword>
<keyword id="KW-0479">Metal-binding</keyword>
<keyword id="KW-0934">Plastid</keyword>
<keyword id="KW-0809">Transit peptide</keyword>
<reference key="1">
    <citation type="journal article" date="2011" name="Mol. Plant">
        <title>Product variability of the 'cineole cassette' monoterpene synthases of related Nicotiana species.</title>
        <authorList>
            <person name="Faehnrich A."/>
            <person name="Krause K."/>
            <person name="Piechulla B."/>
        </authorList>
    </citation>
    <scope>NUCLEOTIDE SEQUENCE [MRNA]</scope>
    <scope>FUNCTION</scope>
    <scope>CATALYTIC ACTIVITY</scope>
    <scope>PATHWAY</scope>
    <scope>TISSUE SPECIFICITY</scope>
    <scope>DEVELOPMENTAL STAGE</scope>
    <scope>INDUCTION</scope>
    <source>
        <strain>cv. TW 74</strain>
    </source>
</reference>
<sequence length="522" mass="61316">RRSGNYQPTMWDFEYIQSIHNDYAGDKYMKRFNELKEEMKKMIMAEGSQELEKLELIDNLQRLGVSYHFKHEIMQILSSIKQHSTPADSLYATALKFRLLREHGFHISQEIFDGLSETHTKDTKGMLYLYEASFLATEGESELEQAWTEKHLREYLKNKNIDQNVAKLVHRALELPLHWRMLRLEARWFISFYKKRQDMIPLLLELAILDFNIVQAAHIQDLKYVARWWKETGLAENLPFARDRLVENFFWTIGVNFLPQYGYSRRIETKVNALVTAIDDVYDVFGTLDELQCFTDAIQRWNTDELDNLPDNMKMCYFALDDFINEVACDALIVPYLRNAWTDLCKSYLIEAKWYFSKYIPTMEEYMDNAWISISAPVILVHAYFLIANPVNKEALHYLRNYHDIIRWSALILRLANDLGTSSDELKRGDVPKSIQCYMNEKKVSEEEARQHIRLLISETWKKLNEAHNVAAHPFPKMFVKSAMNLARMAQCMYQHGDGHGGQNSETQNRIMALLFESIPPA</sequence>
<gene>
    <name evidence="6" type="primary">TER</name>
</gene>
<evidence type="ECO:0000250" key="1">
    <source>
        <dbReference type="UniProtKB" id="A0A1C9J6A7"/>
    </source>
</evidence>
<evidence type="ECO:0000250" key="2">
    <source>
        <dbReference type="UniProtKB" id="Q40577"/>
    </source>
</evidence>
<evidence type="ECO:0000250" key="3">
    <source>
        <dbReference type="UniProtKB" id="Q6JD73"/>
    </source>
</evidence>
<evidence type="ECO:0000255" key="4"/>
<evidence type="ECO:0000269" key="5">
    <source>
    </source>
</evidence>
<evidence type="ECO:0000303" key="6">
    <source>
    </source>
</evidence>
<evidence type="ECO:0000305" key="7"/>
<evidence type="ECO:0000312" key="8">
    <source>
        <dbReference type="EMBL" id="AEX09186.1"/>
    </source>
</evidence>
<protein>
    <recommendedName>
        <fullName evidence="6">Terpineol synthase, chloroplastic</fullName>
        <ecNumber evidence="5">4.2.3.111</ecNumber>
    </recommendedName>
    <alternativeName>
        <fullName evidence="6">1,8-cineol synthase, chloroplastic</fullName>
        <ecNumber evidence="5">4.2.3.108</ecNumber>
    </alternativeName>
    <alternativeName>
        <fullName evidence="6">Alpha-pinene synthase</fullName>
        <ecNumber evidence="5">4.2.3.-</ecNumber>
    </alternativeName>
    <alternativeName>
        <fullName evidence="6">Beta-myrcene synthase</fullName>
        <ecNumber evidence="5">4.2.3.15</ecNumber>
    </alternativeName>
    <alternativeName>
        <fullName evidence="6">Limonene synthase</fullName>
        <ecNumber evidence="5">4.2.3.-</ecNumber>
    </alternativeName>
    <alternativeName>
        <fullName evidence="6">Sabinene synthase</fullName>
        <ecNumber evidence="5">4.2.3.-</ecNumber>
    </alternativeName>
</protein>
<feature type="transit peptide" description="Chloroplast" evidence="4">
    <location>
        <begin position="1" status="less than"/>
        <end status="unknown"/>
    </location>
</feature>
<feature type="chain" id="PRO_0000455075" description="Terpineol synthase, chloroplastic">
    <location>
        <begin status="unknown"/>
        <end position="522"/>
    </location>
</feature>
<feature type="short sequence motif" description="DDXXD motif" evidence="7">
    <location>
        <begin position="279"/>
        <end position="283"/>
    </location>
</feature>
<feature type="binding site" evidence="2">
    <location>
        <position position="242"/>
    </location>
    <ligand>
        <name>(2E)-geranyl diphosphate</name>
        <dbReference type="ChEBI" id="CHEBI:58057"/>
    </ligand>
</feature>
<feature type="binding site" evidence="2">
    <location>
        <position position="279"/>
    </location>
    <ligand>
        <name>(2E)-geranyl diphosphate</name>
        <dbReference type="ChEBI" id="CHEBI:58057"/>
    </ligand>
</feature>
<feature type="binding site" evidence="2">
    <location>
        <position position="279"/>
    </location>
    <ligand>
        <name>Mg(2+)</name>
        <dbReference type="ChEBI" id="CHEBI:18420"/>
        <label>1</label>
    </ligand>
</feature>
<feature type="binding site" evidence="2">
    <location>
        <position position="279"/>
    </location>
    <ligand>
        <name>Mg(2+)</name>
        <dbReference type="ChEBI" id="CHEBI:18420"/>
        <label>2</label>
    </ligand>
</feature>
<feature type="binding site" evidence="2">
    <location>
        <position position="283"/>
    </location>
    <ligand>
        <name>(2E)-geranyl diphosphate</name>
        <dbReference type="ChEBI" id="CHEBI:58057"/>
    </ligand>
</feature>
<feature type="binding site" evidence="2">
    <location>
        <position position="283"/>
    </location>
    <ligand>
        <name>Mg(2+)</name>
        <dbReference type="ChEBI" id="CHEBI:18420"/>
        <label>1</label>
    </ligand>
</feature>
<feature type="binding site" evidence="2">
    <location>
        <position position="283"/>
    </location>
    <ligand>
        <name>Mg(2+)</name>
        <dbReference type="ChEBI" id="CHEBI:18420"/>
        <label>2</label>
    </ligand>
</feature>
<feature type="binding site" evidence="2">
    <location>
        <position position="414"/>
    </location>
    <ligand>
        <name>(2E)-geranyl diphosphate</name>
        <dbReference type="ChEBI" id="CHEBI:58057"/>
    </ligand>
</feature>
<feature type="binding site" evidence="2">
    <location>
        <position position="417"/>
    </location>
    <ligand>
        <name>(2E)-geranyl diphosphate</name>
        <dbReference type="ChEBI" id="CHEBI:58057"/>
    </ligand>
</feature>
<feature type="binding site" evidence="2">
    <location>
        <position position="417"/>
    </location>
    <ligand>
        <name>Mg(2+)</name>
        <dbReference type="ChEBI" id="CHEBI:18420"/>
        <label>3</label>
    </ligand>
</feature>
<feature type="binding site" evidence="2">
    <location>
        <position position="421"/>
    </location>
    <ligand>
        <name>Mg(2+)</name>
        <dbReference type="ChEBI" id="CHEBI:18420"/>
        <label>3</label>
    </ligand>
</feature>
<feature type="binding site" evidence="2">
    <location>
        <position position="425"/>
    </location>
    <ligand>
        <name>Mg(2+)</name>
        <dbReference type="ChEBI" id="CHEBI:18420"/>
        <label>3</label>
    </ligand>
</feature>
<feature type="non-terminal residue" evidence="8">
    <location>
        <position position="1"/>
    </location>
</feature>
<dbReference type="EC" id="4.2.3.111" evidence="5"/>
<dbReference type="EC" id="4.2.3.108" evidence="5"/>
<dbReference type="EC" id="4.2.3.-" evidence="5"/>
<dbReference type="EC" id="4.2.3.15" evidence="5"/>
<dbReference type="EMBL" id="JN989317">
    <property type="protein sequence ID" value="AEX09186.1"/>
    <property type="molecule type" value="mRNA"/>
</dbReference>
<dbReference type="SMR" id="H2ELN1"/>
<dbReference type="BRENDA" id="4.2.3.108">
    <property type="organism ID" value="3637"/>
</dbReference>
<dbReference type="BRENDA" id="4.2.3.111">
    <property type="organism ID" value="3637"/>
</dbReference>
<dbReference type="UniPathway" id="UPA00213"/>
<dbReference type="GO" id="GO:0009507">
    <property type="term" value="C:chloroplast"/>
    <property type="evidence" value="ECO:0007669"/>
    <property type="project" value="UniProtKB-SubCell"/>
</dbReference>
<dbReference type="GO" id="GO:0102313">
    <property type="term" value="F:1,8-cineole synthase activity"/>
    <property type="evidence" value="ECO:0000314"/>
    <property type="project" value="UniProtKB"/>
</dbReference>
<dbReference type="GO" id="GO:0000287">
    <property type="term" value="F:magnesium ion binding"/>
    <property type="evidence" value="ECO:0007669"/>
    <property type="project" value="InterPro"/>
</dbReference>
<dbReference type="GO" id="GO:0050551">
    <property type="term" value="F:myrcene synthase activity"/>
    <property type="evidence" value="ECO:0000314"/>
    <property type="project" value="UniProtKB"/>
</dbReference>
<dbReference type="GO" id="GO:0050550">
    <property type="term" value="F:pinene synthase activity"/>
    <property type="evidence" value="ECO:0000314"/>
    <property type="project" value="UniProtKB"/>
</dbReference>
<dbReference type="GO" id="GO:0080015">
    <property type="term" value="F:sabinene synthase activity"/>
    <property type="evidence" value="ECO:0000314"/>
    <property type="project" value="UniProtKB"/>
</dbReference>
<dbReference type="GO" id="GO:0046248">
    <property type="term" value="P:alpha-pinene biosynthetic process"/>
    <property type="evidence" value="ECO:0000314"/>
    <property type="project" value="UniProtKB"/>
</dbReference>
<dbReference type="GO" id="GO:0007623">
    <property type="term" value="P:circadian rhythm"/>
    <property type="evidence" value="ECO:0000270"/>
    <property type="project" value="UniProtKB"/>
</dbReference>
<dbReference type="GO" id="GO:0016102">
    <property type="term" value="P:diterpenoid biosynthetic process"/>
    <property type="evidence" value="ECO:0007669"/>
    <property type="project" value="InterPro"/>
</dbReference>
<dbReference type="GO" id="GO:0010597">
    <property type="term" value="P:green leaf volatile biosynthetic process"/>
    <property type="evidence" value="ECO:0000314"/>
    <property type="project" value="UniProtKB"/>
</dbReference>
<dbReference type="GO" id="GO:0046250">
    <property type="term" value="P:limonene biosynthetic process"/>
    <property type="evidence" value="ECO:0000314"/>
    <property type="project" value="UniProtKB"/>
</dbReference>
<dbReference type="GO" id="GO:0016114">
    <property type="term" value="P:terpenoid biosynthetic process"/>
    <property type="evidence" value="ECO:0000314"/>
    <property type="project" value="UniProtKB"/>
</dbReference>
<dbReference type="CDD" id="cd00684">
    <property type="entry name" value="Terpene_cyclase_plant_C1"/>
    <property type="match status" value="1"/>
</dbReference>
<dbReference type="FunFam" id="1.10.600.10:FF:000007">
    <property type="entry name" value="Isoprene synthase, chloroplastic"/>
    <property type="match status" value="1"/>
</dbReference>
<dbReference type="Gene3D" id="1.10.600.10">
    <property type="entry name" value="Farnesyl Diphosphate Synthase"/>
    <property type="match status" value="1"/>
</dbReference>
<dbReference type="Gene3D" id="1.50.10.130">
    <property type="entry name" value="Terpene synthase, N-terminal domain"/>
    <property type="match status" value="1"/>
</dbReference>
<dbReference type="InterPro" id="IPR008949">
    <property type="entry name" value="Isoprenoid_synthase_dom_sf"/>
</dbReference>
<dbReference type="InterPro" id="IPR034741">
    <property type="entry name" value="Terpene_cyclase-like_1_C"/>
</dbReference>
<dbReference type="InterPro" id="IPR044814">
    <property type="entry name" value="Terpene_cyclase_plant_C1"/>
</dbReference>
<dbReference type="InterPro" id="IPR001906">
    <property type="entry name" value="Terpene_synth_N"/>
</dbReference>
<dbReference type="InterPro" id="IPR036965">
    <property type="entry name" value="Terpene_synth_N_sf"/>
</dbReference>
<dbReference type="InterPro" id="IPR050148">
    <property type="entry name" value="Terpene_synthase-like"/>
</dbReference>
<dbReference type="InterPro" id="IPR005630">
    <property type="entry name" value="Terpene_synthase_metal-bd"/>
</dbReference>
<dbReference type="InterPro" id="IPR008930">
    <property type="entry name" value="Terpenoid_cyclase/PrenylTrfase"/>
</dbReference>
<dbReference type="PANTHER" id="PTHR31225">
    <property type="entry name" value="OS04G0344100 PROTEIN-RELATED"/>
    <property type="match status" value="1"/>
</dbReference>
<dbReference type="PANTHER" id="PTHR31225:SF9">
    <property type="entry name" value="TERPENE SYNTHASE 10"/>
    <property type="match status" value="1"/>
</dbReference>
<dbReference type="Pfam" id="PF01397">
    <property type="entry name" value="Terpene_synth"/>
    <property type="match status" value="1"/>
</dbReference>
<dbReference type="Pfam" id="PF03936">
    <property type="entry name" value="Terpene_synth_C"/>
    <property type="match status" value="1"/>
</dbReference>
<dbReference type="SFLD" id="SFLDS00005">
    <property type="entry name" value="Isoprenoid_Synthase_Type_I"/>
    <property type="match status" value="1"/>
</dbReference>
<dbReference type="SFLD" id="SFLDG01019">
    <property type="entry name" value="Terpene_Cyclase_Like_1_C_Termi"/>
    <property type="match status" value="1"/>
</dbReference>
<dbReference type="SUPFAM" id="SSF48239">
    <property type="entry name" value="Terpenoid cyclases/Protein prenyltransferases"/>
    <property type="match status" value="1"/>
</dbReference>
<dbReference type="SUPFAM" id="SSF48576">
    <property type="entry name" value="Terpenoid synthases"/>
    <property type="match status" value="1"/>
</dbReference>
<accession>H2ELN1</accession>
<name>TER_NICLA</name>